<name>SYC_AZOPC</name>
<sequence length="492" mass="56682">MKNQLFIYNTLTGRKELFQSLYPKRVGLYVCGPTVYGDPHLGHARPAITFDILFRYLMHLNYKVRYVRNITDVGHLTSDSDLGEDKIARKARLEDLEPMEVVQHYLNLYHKTMDALNVLPPSIEPHASAHIIEQIQLIKEILEKGYAYESKGSVYFDVEKYNKKYNYGKLSGQNIADMLNTTRKLDGQEGKRNPIDFALWKKASSKHIMQWISPWSNGFPGWHLECTTMSRKYLGNLFDIHGGGMDLIFPHHECEIAQKVASTGYEGVKYWMHNNMVTVNGQKMGKSSNNFINLEQLFNGTNPLLIQSYNPMTVRFFILQSHYRNTIDFSNKALQASKKGLSRLLEANNNIKQLTAQTTNSTVNIEGLRNKSIEAMNDDLNTPIIISYLFEATRIVNSALAKQTQLTTEDIQQLKDFFQLFLFNLLGIKDELKYKNTSYNSFAKAVDLLLQIRVQAKQEKNWIFADKIRDELTVLGFEVKDTKNGFEWKLSK</sequence>
<proteinExistence type="inferred from homology"/>
<feature type="chain" id="PRO_1000090816" description="Cysteine--tRNA ligase">
    <location>
        <begin position="1"/>
        <end position="492"/>
    </location>
</feature>
<feature type="short sequence motif" description="'HIGH' region">
    <location>
        <begin position="33"/>
        <end position="43"/>
    </location>
</feature>
<feature type="short sequence motif" description="'KMSKS' region">
    <location>
        <begin position="283"/>
        <end position="287"/>
    </location>
</feature>
<feature type="binding site" evidence="1">
    <location>
        <position position="31"/>
    </location>
    <ligand>
        <name>Zn(2+)</name>
        <dbReference type="ChEBI" id="CHEBI:29105"/>
    </ligand>
</feature>
<feature type="binding site" evidence="1">
    <location>
        <position position="226"/>
    </location>
    <ligand>
        <name>Zn(2+)</name>
        <dbReference type="ChEBI" id="CHEBI:29105"/>
    </ligand>
</feature>
<feature type="binding site" evidence="1">
    <location>
        <position position="251"/>
    </location>
    <ligand>
        <name>Zn(2+)</name>
        <dbReference type="ChEBI" id="CHEBI:29105"/>
    </ligand>
</feature>
<feature type="binding site" evidence="1">
    <location>
        <position position="255"/>
    </location>
    <ligand>
        <name>Zn(2+)</name>
        <dbReference type="ChEBI" id="CHEBI:29105"/>
    </ligand>
</feature>
<feature type="binding site" evidence="1">
    <location>
        <position position="286"/>
    </location>
    <ligand>
        <name>ATP</name>
        <dbReference type="ChEBI" id="CHEBI:30616"/>
    </ligand>
</feature>
<evidence type="ECO:0000255" key="1">
    <source>
        <dbReference type="HAMAP-Rule" id="MF_00041"/>
    </source>
</evidence>
<protein>
    <recommendedName>
        <fullName evidence="1">Cysteine--tRNA ligase</fullName>
        <ecNumber evidence="1">6.1.1.16</ecNumber>
    </recommendedName>
    <alternativeName>
        <fullName evidence="1">Cysteinyl-tRNA synthetase</fullName>
        <shortName evidence="1">CysRS</shortName>
    </alternativeName>
</protein>
<organism>
    <name type="scientific">Azobacteroides pseudotrichonymphae genomovar. CFP2</name>
    <dbReference type="NCBI Taxonomy" id="511995"/>
    <lineage>
        <taxon>Bacteria</taxon>
        <taxon>Pseudomonadati</taxon>
        <taxon>Bacteroidota</taxon>
        <taxon>Bacteroidia</taxon>
        <taxon>Bacteroidales</taxon>
        <taxon>Candidatus Azobacteroides</taxon>
    </lineage>
</organism>
<dbReference type="EC" id="6.1.1.16" evidence="1"/>
<dbReference type="EMBL" id="AP010656">
    <property type="protein sequence ID" value="BAG83563.1"/>
    <property type="molecule type" value="Genomic_DNA"/>
</dbReference>
<dbReference type="RefSeq" id="WP_012573324.1">
    <property type="nucleotide sequence ID" value="NC_011565.1"/>
</dbReference>
<dbReference type="SMR" id="B6YQU1"/>
<dbReference type="STRING" id="511995.CFPG_300"/>
<dbReference type="KEGG" id="aps:CFPG_300"/>
<dbReference type="eggNOG" id="COG0215">
    <property type="taxonomic scope" value="Bacteria"/>
</dbReference>
<dbReference type="HOGENOM" id="CLU_013528_0_1_10"/>
<dbReference type="OrthoDB" id="9815130at2"/>
<dbReference type="Proteomes" id="UP000000723">
    <property type="component" value="Chromosome"/>
</dbReference>
<dbReference type="GO" id="GO:0005829">
    <property type="term" value="C:cytosol"/>
    <property type="evidence" value="ECO:0007669"/>
    <property type="project" value="TreeGrafter"/>
</dbReference>
<dbReference type="GO" id="GO:0005524">
    <property type="term" value="F:ATP binding"/>
    <property type="evidence" value="ECO:0007669"/>
    <property type="project" value="UniProtKB-UniRule"/>
</dbReference>
<dbReference type="GO" id="GO:0004817">
    <property type="term" value="F:cysteine-tRNA ligase activity"/>
    <property type="evidence" value="ECO:0007669"/>
    <property type="project" value="UniProtKB-UniRule"/>
</dbReference>
<dbReference type="GO" id="GO:0008270">
    <property type="term" value="F:zinc ion binding"/>
    <property type="evidence" value="ECO:0007669"/>
    <property type="project" value="UniProtKB-UniRule"/>
</dbReference>
<dbReference type="GO" id="GO:0006423">
    <property type="term" value="P:cysteinyl-tRNA aminoacylation"/>
    <property type="evidence" value="ECO:0007669"/>
    <property type="project" value="UniProtKB-UniRule"/>
</dbReference>
<dbReference type="CDD" id="cd00672">
    <property type="entry name" value="CysRS_core"/>
    <property type="match status" value="1"/>
</dbReference>
<dbReference type="FunFam" id="3.40.50.620:FF:000140">
    <property type="entry name" value="Cysteine--tRNA ligase"/>
    <property type="match status" value="1"/>
</dbReference>
<dbReference type="Gene3D" id="1.20.120.1910">
    <property type="entry name" value="Cysteine-tRNA ligase, C-terminal anti-codon recognition domain"/>
    <property type="match status" value="1"/>
</dbReference>
<dbReference type="Gene3D" id="3.40.50.620">
    <property type="entry name" value="HUPs"/>
    <property type="match status" value="1"/>
</dbReference>
<dbReference type="HAMAP" id="MF_00041">
    <property type="entry name" value="Cys_tRNA_synth"/>
    <property type="match status" value="1"/>
</dbReference>
<dbReference type="InterPro" id="IPR015803">
    <property type="entry name" value="Cys-tRNA-ligase"/>
</dbReference>
<dbReference type="InterPro" id="IPR015273">
    <property type="entry name" value="Cys-tRNA-synt_Ia_DALR"/>
</dbReference>
<dbReference type="InterPro" id="IPR024909">
    <property type="entry name" value="Cys-tRNA/MSH_ligase"/>
</dbReference>
<dbReference type="InterPro" id="IPR014729">
    <property type="entry name" value="Rossmann-like_a/b/a_fold"/>
</dbReference>
<dbReference type="InterPro" id="IPR032678">
    <property type="entry name" value="tRNA-synt_1_cat_dom"/>
</dbReference>
<dbReference type="InterPro" id="IPR009080">
    <property type="entry name" value="tRNAsynth_Ia_anticodon-bd"/>
</dbReference>
<dbReference type="NCBIfam" id="TIGR00435">
    <property type="entry name" value="cysS"/>
    <property type="match status" value="1"/>
</dbReference>
<dbReference type="PANTHER" id="PTHR10890:SF3">
    <property type="entry name" value="CYSTEINE--TRNA LIGASE, CYTOPLASMIC"/>
    <property type="match status" value="1"/>
</dbReference>
<dbReference type="PANTHER" id="PTHR10890">
    <property type="entry name" value="CYSTEINYL-TRNA SYNTHETASE"/>
    <property type="match status" value="1"/>
</dbReference>
<dbReference type="Pfam" id="PF09190">
    <property type="entry name" value="DALR_2"/>
    <property type="match status" value="1"/>
</dbReference>
<dbReference type="Pfam" id="PF01406">
    <property type="entry name" value="tRNA-synt_1e"/>
    <property type="match status" value="1"/>
</dbReference>
<dbReference type="PRINTS" id="PR00983">
    <property type="entry name" value="TRNASYNTHCYS"/>
</dbReference>
<dbReference type="SMART" id="SM00840">
    <property type="entry name" value="DALR_2"/>
    <property type="match status" value="1"/>
</dbReference>
<dbReference type="SUPFAM" id="SSF47323">
    <property type="entry name" value="Anticodon-binding domain of a subclass of class I aminoacyl-tRNA synthetases"/>
    <property type="match status" value="1"/>
</dbReference>
<dbReference type="SUPFAM" id="SSF52374">
    <property type="entry name" value="Nucleotidylyl transferase"/>
    <property type="match status" value="1"/>
</dbReference>
<reference key="1">
    <citation type="journal article" date="2008" name="Science">
        <title>Genome of an endosymbiont coupling N2 fixation to cellulolysis within RT protist cells in termite gut.</title>
        <authorList>
            <person name="Hongoh Y."/>
            <person name="Sharma V.K."/>
            <person name="Prakash T."/>
            <person name="Noda S."/>
            <person name="Toh H."/>
            <person name="Taylor T.D."/>
            <person name="Kudo T."/>
            <person name="Sakaki Y."/>
            <person name="Toyoda A."/>
            <person name="Hattori M."/>
            <person name="Ohkuma M."/>
        </authorList>
    </citation>
    <scope>NUCLEOTIDE SEQUENCE [LARGE SCALE GENOMIC DNA]</scope>
</reference>
<gene>
    <name evidence="1" type="primary">cysS</name>
    <name type="ordered locus">CFPG_300</name>
</gene>
<comment type="catalytic activity">
    <reaction evidence="1">
        <text>tRNA(Cys) + L-cysteine + ATP = L-cysteinyl-tRNA(Cys) + AMP + diphosphate</text>
        <dbReference type="Rhea" id="RHEA:17773"/>
        <dbReference type="Rhea" id="RHEA-COMP:9661"/>
        <dbReference type="Rhea" id="RHEA-COMP:9679"/>
        <dbReference type="ChEBI" id="CHEBI:30616"/>
        <dbReference type="ChEBI" id="CHEBI:33019"/>
        <dbReference type="ChEBI" id="CHEBI:35235"/>
        <dbReference type="ChEBI" id="CHEBI:78442"/>
        <dbReference type="ChEBI" id="CHEBI:78517"/>
        <dbReference type="ChEBI" id="CHEBI:456215"/>
        <dbReference type="EC" id="6.1.1.16"/>
    </reaction>
</comment>
<comment type="cofactor">
    <cofactor evidence="1">
        <name>Zn(2+)</name>
        <dbReference type="ChEBI" id="CHEBI:29105"/>
    </cofactor>
    <text evidence="1">Binds 1 zinc ion per subunit.</text>
</comment>
<comment type="subunit">
    <text evidence="1">Monomer.</text>
</comment>
<comment type="subcellular location">
    <subcellularLocation>
        <location evidence="1">Cytoplasm</location>
    </subcellularLocation>
</comment>
<comment type="similarity">
    <text evidence="1">Belongs to the class-I aminoacyl-tRNA synthetase family.</text>
</comment>
<keyword id="KW-0030">Aminoacyl-tRNA synthetase</keyword>
<keyword id="KW-0067">ATP-binding</keyword>
<keyword id="KW-0963">Cytoplasm</keyword>
<keyword id="KW-0436">Ligase</keyword>
<keyword id="KW-0479">Metal-binding</keyword>
<keyword id="KW-0547">Nucleotide-binding</keyword>
<keyword id="KW-0648">Protein biosynthesis</keyword>
<keyword id="KW-1185">Reference proteome</keyword>
<keyword id="KW-0862">Zinc</keyword>
<accession>B6YQU1</accession>